<sequence length="218" mass="23235">MTQDEMKKAAGWAALEYVEKDSIVGVGTGSTVNHFIDALATMKADIDGAVSSSEASTEKMKALGIPVYDLNSVDELSVYVDGADEINAHMDMIKGGGAALTREKIVAAVADKFICIVDNTKEVDVLGEFPLPVEVIPMARSYVARQLVKLGGDPVYREGVVTDNGNVILDVYNMKIMNPKELEEQINAIVGVVTNGLFAMRGADVLLVGSPEGVKTVK</sequence>
<name>RPIA_SHESH</name>
<organism>
    <name type="scientific">Shewanella sediminis (strain HAW-EB3)</name>
    <dbReference type="NCBI Taxonomy" id="425104"/>
    <lineage>
        <taxon>Bacteria</taxon>
        <taxon>Pseudomonadati</taxon>
        <taxon>Pseudomonadota</taxon>
        <taxon>Gammaproteobacteria</taxon>
        <taxon>Alteromonadales</taxon>
        <taxon>Shewanellaceae</taxon>
        <taxon>Shewanella</taxon>
    </lineage>
</organism>
<gene>
    <name evidence="1" type="primary">rpiA</name>
    <name type="ordered locus">Ssed_0898</name>
</gene>
<comment type="function">
    <text evidence="1">Catalyzes the reversible conversion of ribose-5-phosphate to ribulose 5-phosphate.</text>
</comment>
<comment type="catalytic activity">
    <reaction evidence="1">
        <text>aldehydo-D-ribose 5-phosphate = D-ribulose 5-phosphate</text>
        <dbReference type="Rhea" id="RHEA:14657"/>
        <dbReference type="ChEBI" id="CHEBI:58121"/>
        <dbReference type="ChEBI" id="CHEBI:58273"/>
        <dbReference type="EC" id="5.3.1.6"/>
    </reaction>
</comment>
<comment type="pathway">
    <text evidence="1">Carbohydrate degradation; pentose phosphate pathway; D-ribose 5-phosphate from D-ribulose 5-phosphate (non-oxidative stage): step 1/1.</text>
</comment>
<comment type="subunit">
    <text evidence="1">Homodimer.</text>
</comment>
<comment type="similarity">
    <text evidence="1">Belongs to the ribose 5-phosphate isomerase family.</text>
</comment>
<dbReference type="EC" id="5.3.1.6" evidence="1"/>
<dbReference type="EMBL" id="CP000821">
    <property type="protein sequence ID" value="ABV35509.1"/>
    <property type="molecule type" value="Genomic_DNA"/>
</dbReference>
<dbReference type="RefSeq" id="WP_012141245.1">
    <property type="nucleotide sequence ID" value="NC_009831.1"/>
</dbReference>
<dbReference type="SMR" id="A8FRN6"/>
<dbReference type="STRING" id="425104.Ssed_0898"/>
<dbReference type="KEGG" id="sse:Ssed_0898"/>
<dbReference type="eggNOG" id="COG0120">
    <property type="taxonomic scope" value="Bacteria"/>
</dbReference>
<dbReference type="HOGENOM" id="CLU_056590_1_1_6"/>
<dbReference type="OrthoDB" id="5870696at2"/>
<dbReference type="UniPathway" id="UPA00115">
    <property type="reaction ID" value="UER00412"/>
</dbReference>
<dbReference type="Proteomes" id="UP000002015">
    <property type="component" value="Chromosome"/>
</dbReference>
<dbReference type="GO" id="GO:0005829">
    <property type="term" value="C:cytosol"/>
    <property type="evidence" value="ECO:0007669"/>
    <property type="project" value="TreeGrafter"/>
</dbReference>
<dbReference type="GO" id="GO:0004751">
    <property type="term" value="F:ribose-5-phosphate isomerase activity"/>
    <property type="evidence" value="ECO:0007669"/>
    <property type="project" value="UniProtKB-UniRule"/>
</dbReference>
<dbReference type="GO" id="GO:0006014">
    <property type="term" value="P:D-ribose metabolic process"/>
    <property type="evidence" value="ECO:0007669"/>
    <property type="project" value="TreeGrafter"/>
</dbReference>
<dbReference type="GO" id="GO:0009052">
    <property type="term" value="P:pentose-phosphate shunt, non-oxidative branch"/>
    <property type="evidence" value="ECO:0007669"/>
    <property type="project" value="UniProtKB-UniRule"/>
</dbReference>
<dbReference type="CDD" id="cd01398">
    <property type="entry name" value="RPI_A"/>
    <property type="match status" value="1"/>
</dbReference>
<dbReference type="FunFam" id="3.30.70.260:FF:000004">
    <property type="entry name" value="Ribose-5-phosphate isomerase A"/>
    <property type="match status" value="1"/>
</dbReference>
<dbReference type="FunFam" id="3.40.50.1360:FF:000001">
    <property type="entry name" value="Ribose-5-phosphate isomerase A"/>
    <property type="match status" value="1"/>
</dbReference>
<dbReference type="Gene3D" id="3.30.70.260">
    <property type="match status" value="1"/>
</dbReference>
<dbReference type="Gene3D" id="3.40.50.1360">
    <property type="match status" value="1"/>
</dbReference>
<dbReference type="HAMAP" id="MF_00170">
    <property type="entry name" value="Rib_5P_isom_A"/>
    <property type="match status" value="1"/>
</dbReference>
<dbReference type="InterPro" id="IPR037171">
    <property type="entry name" value="NagB/RpiA_transferase-like"/>
</dbReference>
<dbReference type="InterPro" id="IPR020672">
    <property type="entry name" value="Ribose5P_isomerase_typA_subgr"/>
</dbReference>
<dbReference type="InterPro" id="IPR004788">
    <property type="entry name" value="Ribose5P_isomerase_type_A"/>
</dbReference>
<dbReference type="NCBIfam" id="NF001924">
    <property type="entry name" value="PRK00702.1"/>
    <property type="match status" value="1"/>
</dbReference>
<dbReference type="NCBIfam" id="TIGR00021">
    <property type="entry name" value="rpiA"/>
    <property type="match status" value="1"/>
</dbReference>
<dbReference type="PANTHER" id="PTHR11934">
    <property type="entry name" value="RIBOSE-5-PHOSPHATE ISOMERASE"/>
    <property type="match status" value="1"/>
</dbReference>
<dbReference type="PANTHER" id="PTHR11934:SF0">
    <property type="entry name" value="RIBOSE-5-PHOSPHATE ISOMERASE"/>
    <property type="match status" value="1"/>
</dbReference>
<dbReference type="Pfam" id="PF06026">
    <property type="entry name" value="Rib_5-P_isom_A"/>
    <property type="match status" value="1"/>
</dbReference>
<dbReference type="SUPFAM" id="SSF75445">
    <property type="entry name" value="D-ribose-5-phosphate isomerase (RpiA), lid domain"/>
    <property type="match status" value="1"/>
</dbReference>
<dbReference type="SUPFAM" id="SSF100950">
    <property type="entry name" value="NagB/RpiA/CoA transferase-like"/>
    <property type="match status" value="1"/>
</dbReference>
<evidence type="ECO:0000255" key="1">
    <source>
        <dbReference type="HAMAP-Rule" id="MF_00170"/>
    </source>
</evidence>
<reference key="1">
    <citation type="submission" date="2007-08" db="EMBL/GenBank/DDBJ databases">
        <title>Complete sequence of Shewanella sediminis HAW-EB3.</title>
        <authorList>
            <consortium name="US DOE Joint Genome Institute"/>
            <person name="Copeland A."/>
            <person name="Lucas S."/>
            <person name="Lapidus A."/>
            <person name="Barry K."/>
            <person name="Glavina del Rio T."/>
            <person name="Dalin E."/>
            <person name="Tice H."/>
            <person name="Pitluck S."/>
            <person name="Chertkov O."/>
            <person name="Brettin T."/>
            <person name="Bruce D."/>
            <person name="Detter J.C."/>
            <person name="Han C."/>
            <person name="Schmutz J."/>
            <person name="Larimer F."/>
            <person name="Land M."/>
            <person name="Hauser L."/>
            <person name="Kyrpides N."/>
            <person name="Kim E."/>
            <person name="Zhao J.-S."/>
            <person name="Richardson P."/>
        </authorList>
    </citation>
    <scope>NUCLEOTIDE SEQUENCE [LARGE SCALE GENOMIC DNA]</scope>
    <source>
        <strain>HAW-EB3</strain>
    </source>
</reference>
<protein>
    <recommendedName>
        <fullName evidence="1">Ribose-5-phosphate isomerase A</fullName>
        <ecNumber evidence="1">5.3.1.6</ecNumber>
    </recommendedName>
    <alternativeName>
        <fullName evidence="1">Phosphoriboisomerase A</fullName>
        <shortName evidence="1">PRI</shortName>
    </alternativeName>
</protein>
<proteinExistence type="inferred from homology"/>
<accession>A8FRN6</accession>
<keyword id="KW-0413">Isomerase</keyword>
<keyword id="KW-1185">Reference proteome</keyword>
<feature type="chain" id="PRO_1000077079" description="Ribose-5-phosphate isomerase A">
    <location>
        <begin position="1"/>
        <end position="218"/>
    </location>
</feature>
<feature type="active site" description="Proton acceptor" evidence="1">
    <location>
        <position position="103"/>
    </location>
</feature>
<feature type="binding site" evidence="1">
    <location>
        <begin position="28"/>
        <end position="31"/>
    </location>
    <ligand>
        <name>substrate</name>
    </ligand>
</feature>
<feature type="binding site" evidence="1">
    <location>
        <begin position="81"/>
        <end position="84"/>
    </location>
    <ligand>
        <name>substrate</name>
    </ligand>
</feature>
<feature type="binding site" evidence="1">
    <location>
        <begin position="94"/>
        <end position="97"/>
    </location>
    <ligand>
        <name>substrate</name>
    </ligand>
</feature>
<feature type="binding site" evidence="1">
    <location>
        <position position="121"/>
    </location>
    <ligand>
        <name>substrate</name>
    </ligand>
</feature>